<dbReference type="EC" id="2.5.1.18"/>
<dbReference type="EMBL" id="AC024260">
    <property type="protein sequence ID" value="AAG51968.1"/>
    <property type="molecule type" value="Genomic_DNA"/>
</dbReference>
<dbReference type="EMBL" id="CP002684">
    <property type="protein sequence ID" value="AEE32981.1"/>
    <property type="molecule type" value="Genomic_DNA"/>
</dbReference>
<dbReference type="PIR" id="A96577">
    <property type="entry name" value="A96577"/>
</dbReference>
<dbReference type="RefSeq" id="NP_175772.1">
    <property type="nucleotide sequence ID" value="NM_104246.2"/>
</dbReference>
<dbReference type="SMR" id="Q9C8M3"/>
<dbReference type="FunCoup" id="Q9C8M3">
    <property type="interactions" value="137"/>
</dbReference>
<dbReference type="STRING" id="3702.Q9C8M3"/>
<dbReference type="iPTMnet" id="Q9C8M3"/>
<dbReference type="PaxDb" id="3702-AT1G53680.1"/>
<dbReference type="ProteomicsDB" id="247203"/>
<dbReference type="EnsemblPlants" id="AT1G53680.1">
    <property type="protein sequence ID" value="AT1G53680.1"/>
    <property type="gene ID" value="AT1G53680"/>
</dbReference>
<dbReference type="GeneID" id="841805"/>
<dbReference type="Gramene" id="AT1G53680.1">
    <property type="protein sequence ID" value="AT1G53680.1"/>
    <property type="gene ID" value="AT1G53680"/>
</dbReference>
<dbReference type="KEGG" id="ath:AT1G53680"/>
<dbReference type="Araport" id="AT1G53680"/>
<dbReference type="TAIR" id="AT1G53680">
    <property type="gene designation" value="GSTU28"/>
</dbReference>
<dbReference type="eggNOG" id="KOG0406">
    <property type="taxonomic scope" value="Eukaryota"/>
</dbReference>
<dbReference type="HOGENOM" id="CLU_011226_18_2_1"/>
<dbReference type="InParanoid" id="Q9C8M3"/>
<dbReference type="OMA" id="IGRKLWM"/>
<dbReference type="OrthoDB" id="202840at2759"/>
<dbReference type="PhylomeDB" id="Q9C8M3"/>
<dbReference type="BioCyc" id="ARA:AT1G53680-MONOMER"/>
<dbReference type="BRENDA" id="2.5.1.18">
    <property type="organism ID" value="399"/>
</dbReference>
<dbReference type="PRO" id="PR:Q9C8M3"/>
<dbReference type="Proteomes" id="UP000006548">
    <property type="component" value="Chromosome 1"/>
</dbReference>
<dbReference type="ExpressionAtlas" id="Q9C8M3">
    <property type="expression patterns" value="baseline and differential"/>
</dbReference>
<dbReference type="GO" id="GO:0005737">
    <property type="term" value="C:cytoplasm"/>
    <property type="evidence" value="ECO:0000303"/>
    <property type="project" value="TAIR"/>
</dbReference>
<dbReference type="GO" id="GO:0005829">
    <property type="term" value="C:cytosol"/>
    <property type="evidence" value="ECO:0007669"/>
    <property type="project" value="UniProtKB-SubCell"/>
</dbReference>
<dbReference type="GO" id="GO:0004364">
    <property type="term" value="F:glutathione transferase activity"/>
    <property type="evidence" value="ECO:0007669"/>
    <property type="project" value="UniProtKB-EC"/>
</dbReference>
<dbReference type="GO" id="GO:0006749">
    <property type="term" value="P:glutathione metabolic process"/>
    <property type="evidence" value="ECO:0007669"/>
    <property type="project" value="InterPro"/>
</dbReference>
<dbReference type="GO" id="GO:0009407">
    <property type="term" value="P:toxin catabolic process"/>
    <property type="evidence" value="ECO:0000304"/>
    <property type="project" value="TAIR"/>
</dbReference>
<dbReference type="CDD" id="cd03185">
    <property type="entry name" value="GST_C_Tau"/>
    <property type="match status" value="1"/>
</dbReference>
<dbReference type="CDD" id="cd03058">
    <property type="entry name" value="GST_N_Tau"/>
    <property type="match status" value="1"/>
</dbReference>
<dbReference type="FunFam" id="1.20.1050.10:FF:000018">
    <property type="entry name" value="Glutathione S-transferase U20"/>
    <property type="match status" value="1"/>
</dbReference>
<dbReference type="FunFam" id="3.40.30.10:FF:000014">
    <property type="entry name" value="Tau class glutathione S-transferase"/>
    <property type="match status" value="1"/>
</dbReference>
<dbReference type="Gene3D" id="1.20.1050.10">
    <property type="match status" value="1"/>
</dbReference>
<dbReference type="Gene3D" id="3.40.30.10">
    <property type="entry name" value="Glutaredoxin"/>
    <property type="match status" value="1"/>
</dbReference>
<dbReference type="InterPro" id="IPR010987">
    <property type="entry name" value="Glutathione-S-Trfase_C-like"/>
</dbReference>
<dbReference type="InterPro" id="IPR036282">
    <property type="entry name" value="Glutathione-S-Trfase_C_sf"/>
</dbReference>
<dbReference type="InterPro" id="IPR040079">
    <property type="entry name" value="Glutathione_S-Trfase"/>
</dbReference>
<dbReference type="InterPro" id="IPR004045">
    <property type="entry name" value="Glutathione_S-Trfase_N"/>
</dbReference>
<dbReference type="InterPro" id="IPR004046">
    <property type="entry name" value="GST_C"/>
</dbReference>
<dbReference type="InterPro" id="IPR045074">
    <property type="entry name" value="GST_C_Tau"/>
</dbReference>
<dbReference type="InterPro" id="IPR045073">
    <property type="entry name" value="Omega/Tau-like"/>
</dbReference>
<dbReference type="InterPro" id="IPR036249">
    <property type="entry name" value="Thioredoxin-like_sf"/>
</dbReference>
<dbReference type="PANTHER" id="PTHR11260:SF612">
    <property type="entry name" value="GLUTATHIONE S-TRANSFERASE U28"/>
    <property type="match status" value="1"/>
</dbReference>
<dbReference type="PANTHER" id="PTHR11260">
    <property type="entry name" value="GLUTATHIONE S-TRANSFERASE, GST, SUPERFAMILY, GST DOMAIN CONTAINING"/>
    <property type="match status" value="1"/>
</dbReference>
<dbReference type="Pfam" id="PF00043">
    <property type="entry name" value="GST_C"/>
    <property type="match status" value="1"/>
</dbReference>
<dbReference type="Pfam" id="PF02798">
    <property type="entry name" value="GST_N"/>
    <property type="match status" value="1"/>
</dbReference>
<dbReference type="SFLD" id="SFLDS00019">
    <property type="entry name" value="Glutathione_Transferase_(cytos"/>
    <property type="match status" value="1"/>
</dbReference>
<dbReference type="SFLD" id="SFLDG01152">
    <property type="entry name" value="Main.3:_Omega-_and_Tau-like"/>
    <property type="match status" value="1"/>
</dbReference>
<dbReference type="SUPFAM" id="SSF47616">
    <property type="entry name" value="GST C-terminal domain-like"/>
    <property type="match status" value="1"/>
</dbReference>
<dbReference type="SUPFAM" id="SSF52833">
    <property type="entry name" value="Thioredoxin-like"/>
    <property type="match status" value="1"/>
</dbReference>
<dbReference type="PROSITE" id="PS50405">
    <property type="entry name" value="GST_CTER"/>
    <property type="match status" value="1"/>
</dbReference>
<dbReference type="PROSITE" id="PS50404">
    <property type="entry name" value="GST_NTER"/>
    <property type="match status" value="1"/>
</dbReference>
<accession>Q9C8M3</accession>
<comment type="function">
    <text evidence="1">May be involved in the conjugation of reduced glutathione to a wide number of exogenous and endogenous hydrophobic electrophiles and have a detoxification role against certain herbicides.</text>
</comment>
<comment type="catalytic activity">
    <reaction>
        <text>RX + glutathione = an S-substituted glutathione + a halide anion + H(+)</text>
        <dbReference type="Rhea" id="RHEA:16437"/>
        <dbReference type="ChEBI" id="CHEBI:15378"/>
        <dbReference type="ChEBI" id="CHEBI:16042"/>
        <dbReference type="ChEBI" id="CHEBI:17792"/>
        <dbReference type="ChEBI" id="CHEBI:57925"/>
        <dbReference type="ChEBI" id="CHEBI:90779"/>
        <dbReference type="EC" id="2.5.1.18"/>
    </reaction>
</comment>
<comment type="subcellular location">
    <subcellularLocation>
        <location evidence="3">Cytoplasm</location>
        <location evidence="3">Cytosol</location>
    </subcellularLocation>
</comment>
<comment type="similarity">
    <text evidence="4">Belongs to the GST superfamily. Tau family.</text>
</comment>
<protein>
    <recommendedName>
        <fullName>Glutathione S-transferase U28</fullName>
        <shortName>AtGSTU28</shortName>
        <ecNumber>2.5.1.18</ecNumber>
    </recommendedName>
    <alternativeName>
        <fullName>GST class-tau member 28</fullName>
    </alternativeName>
</protein>
<feature type="chain" id="PRO_0000413573" description="Glutathione S-transferase U28">
    <location>
        <begin position="1"/>
        <end position="224"/>
    </location>
</feature>
<feature type="domain" description="GST N-terminal">
    <location>
        <begin position="6"/>
        <end position="85"/>
    </location>
</feature>
<feature type="domain" description="GST C-terminal">
    <location>
        <begin position="91"/>
        <end position="217"/>
    </location>
</feature>
<feature type="binding site" evidence="1">
    <location>
        <begin position="16"/>
        <end position="17"/>
    </location>
    <ligand>
        <name>glutathione</name>
        <dbReference type="ChEBI" id="CHEBI:57925"/>
    </ligand>
</feature>
<feature type="binding site" evidence="1">
    <location>
        <begin position="42"/>
        <end position="43"/>
    </location>
    <ligand>
        <name>glutathione</name>
        <dbReference type="ChEBI" id="CHEBI:57925"/>
    </ligand>
</feature>
<feature type="binding site" evidence="1">
    <location>
        <begin position="56"/>
        <end position="57"/>
    </location>
    <ligand>
        <name>glutathione</name>
        <dbReference type="ChEBI" id="CHEBI:57925"/>
    </ligand>
</feature>
<feature type="binding site" evidence="1">
    <location>
        <begin position="69"/>
        <end position="70"/>
    </location>
    <ligand>
        <name>glutathione</name>
        <dbReference type="ChEBI" id="CHEBI:57925"/>
    </ligand>
</feature>
<feature type="modified residue" description="Phosphothreonine" evidence="2">
    <location>
        <position position="154"/>
    </location>
</feature>
<name>GSTUS_ARATH</name>
<organism>
    <name type="scientific">Arabidopsis thaliana</name>
    <name type="common">Mouse-ear cress</name>
    <dbReference type="NCBI Taxonomy" id="3702"/>
    <lineage>
        <taxon>Eukaryota</taxon>
        <taxon>Viridiplantae</taxon>
        <taxon>Streptophyta</taxon>
        <taxon>Embryophyta</taxon>
        <taxon>Tracheophyta</taxon>
        <taxon>Spermatophyta</taxon>
        <taxon>Magnoliopsida</taxon>
        <taxon>eudicotyledons</taxon>
        <taxon>Gunneridae</taxon>
        <taxon>Pentapetalae</taxon>
        <taxon>rosids</taxon>
        <taxon>malvids</taxon>
        <taxon>Brassicales</taxon>
        <taxon>Brassicaceae</taxon>
        <taxon>Camelineae</taxon>
        <taxon>Arabidopsis</taxon>
    </lineage>
</organism>
<gene>
    <name type="primary">GSTU28</name>
    <name type="ordered locus">At1g53680</name>
    <name type="ORF">F22G10.22</name>
</gene>
<evidence type="ECO:0000250" key="1"/>
<evidence type="ECO:0000250" key="2">
    <source>
        <dbReference type="UniProtKB" id="Q9ZW27"/>
    </source>
</evidence>
<evidence type="ECO:0000269" key="3">
    <source>
    </source>
</evidence>
<evidence type="ECO:0000305" key="4"/>
<keyword id="KW-0963">Cytoplasm</keyword>
<keyword id="KW-0216">Detoxification</keyword>
<keyword id="KW-0597">Phosphoprotein</keyword>
<keyword id="KW-1185">Reference proteome</keyword>
<keyword id="KW-0808">Transferase</keyword>
<sequence length="224" mass="25591">MGKENSKVVVLDFWASPYAMRTKVALREKGVEFEVQEEDLWNKSELLLKSNPVHKKVPVLIHNNTPISESLIQVQYIDETWTDAASFLPSDPQSRATARFWADYADKTISFEGGRKIWGNKKGEEQEKGKKEFLESLKVLEAELGDKSYFGGETFGYVDITLVPFYSWFYALEKCGDFSVEAECPKIVAWGKRCVERNSVAATLPESEKVYQQVLKLRQIFGVE</sequence>
<reference key="1">
    <citation type="journal article" date="2000" name="Nature">
        <title>Sequence and analysis of chromosome 1 of the plant Arabidopsis thaliana.</title>
        <authorList>
            <person name="Theologis A."/>
            <person name="Ecker J.R."/>
            <person name="Palm C.J."/>
            <person name="Federspiel N.A."/>
            <person name="Kaul S."/>
            <person name="White O."/>
            <person name="Alonso J."/>
            <person name="Altafi H."/>
            <person name="Araujo R."/>
            <person name="Bowman C.L."/>
            <person name="Brooks S.Y."/>
            <person name="Buehler E."/>
            <person name="Chan A."/>
            <person name="Chao Q."/>
            <person name="Chen H."/>
            <person name="Cheuk R.F."/>
            <person name="Chin C.W."/>
            <person name="Chung M.K."/>
            <person name="Conn L."/>
            <person name="Conway A.B."/>
            <person name="Conway A.R."/>
            <person name="Creasy T.H."/>
            <person name="Dewar K."/>
            <person name="Dunn P."/>
            <person name="Etgu P."/>
            <person name="Feldblyum T.V."/>
            <person name="Feng J.-D."/>
            <person name="Fong B."/>
            <person name="Fujii C.Y."/>
            <person name="Gill J.E."/>
            <person name="Goldsmith A.D."/>
            <person name="Haas B."/>
            <person name="Hansen N.F."/>
            <person name="Hughes B."/>
            <person name="Huizar L."/>
            <person name="Hunter J.L."/>
            <person name="Jenkins J."/>
            <person name="Johnson-Hopson C."/>
            <person name="Khan S."/>
            <person name="Khaykin E."/>
            <person name="Kim C.J."/>
            <person name="Koo H.L."/>
            <person name="Kremenetskaia I."/>
            <person name="Kurtz D.B."/>
            <person name="Kwan A."/>
            <person name="Lam B."/>
            <person name="Langin-Hooper S."/>
            <person name="Lee A."/>
            <person name="Lee J.M."/>
            <person name="Lenz C.A."/>
            <person name="Li J.H."/>
            <person name="Li Y.-P."/>
            <person name="Lin X."/>
            <person name="Liu S.X."/>
            <person name="Liu Z.A."/>
            <person name="Luros J.S."/>
            <person name="Maiti R."/>
            <person name="Marziali A."/>
            <person name="Militscher J."/>
            <person name="Miranda M."/>
            <person name="Nguyen M."/>
            <person name="Nierman W.C."/>
            <person name="Osborne B.I."/>
            <person name="Pai G."/>
            <person name="Peterson J."/>
            <person name="Pham P.K."/>
            <person name="Rizzo M."/>
            <person name="Rooney T."/>
            <person name="Rowley D."/>
            <person name="Sakano H."/>
            <person name="Salzberg S.L."/>
            <person name="Schwartz J.R."/>
            <person name="Shinn P."/>
            <person name="Southwick A.M."/>
            <person name="Sun H."/>
            <person name="Tallon L.J."/>
            <person name="Tambunga G."/>
            <person name="Toriumi M.J."/>
            <person name="Town C.D."/>
            <person name="Utterback T."/>
            <person name="Van Aken S."/>
            <person name="Vaysberg M."/>
            <person name="Vysotskaia V.S."/>
            <person name="Walker M."/>
            <person name="Wu D."/>
            <person name="Yu G."/>
            <person name="Fraser C.M."/>
            <person name="Venter J.C."/>
            <person name="Davis R.W."/>
        </authorList>
    </citation>
    <scope>NUCLEOTIDE SEQUENCE [LARGE SCALE GENOMIC DNA]</scope>
    <source>
        <strain>cv. Columbia</strain>
    </source>
</reference>
<reference key="2">
    <citation type="journal article" date="2017" name="Plant J.">
        <title>Araport11: a complete reannotation of the Arabidopsis thaliana reference genome.</title>
        <authorList>
            <person name="Cheng C.Y."/>
            <person name="Krishnakumar V."/>
            <person name="Chan A.P."/>
            <person name="Thibaud-Nissen F."/>
            <person name="Schobel S."/>
            <person name="Town C.D."/>
        </authorList>
    </citation>
    <scope>GENOME REANNOTATION</scope>
    <source>
        <strain>cv. Columbia</strain>
    </source>
</reference>
<reference key="3">
    <citation type="journal article" date="2002" name="Plant Mol. Biol.">
        <title>Probing the diversity of the Arabidopsis glutathione S-transferase gene family.</title>
        <authorList>
            <person name="Wagner U."/>
            <person name="Edwards R."/>
            <person name="Dixon D.P."/>
            <person name="Mauch F."/>
        </authorList>
    </citation>
    <scope>GENE FAMILY</scope>
    <scope>NOMENCLATURE</scope>
</reference>
<reference key="4">
    <citation type="journal article" date="2009" name="J. Exp. Bot.">
        <title>Enzyme activities and subcellular localization of members of the Arabidopsis glutathione transferase superfamily.</title>
        <authorList>
            <person name="Dixon D.P."/>
            <person name="Hawkins T."/>
            <person name="Hussey P.J."/>
            <person name="Edwards R."/>
        </authorList>
    </citation>
    <scope>SUBCELLULAR LOCATION</scope>
</reference>
<proteinExistence type="inferred from homology"/>